<keyword id="KW-1003">Cell membrane</keyword>
<keyword id="KW-0328">Glycosyltransferase</keyword>
<keyword id="KW-0472">Membrane</keyword>
<keyword id="KW-1185">Reference proteome</keyword>
<keyword id="KW-0808">Transferase</keyword>
<keyword id="KW-0812">Transmembrane</keyword>
<keyword id="KW-1133">Transmembrane helix</keyword>
<organism>
    <name type="scientific">Haloferax volcanii (strain ATCC 29605 / DSM 3757 / JCM 8879 / NBRC 14742 / NCIMB 2012 / VKM B-1768 / DS2)</name>
    <name type="common">Halobacterium volcanii</name>
    <dbReference type="NCBI Taxonomy" id="309800"/>
    <lineage>
        <taxon>Archaea</taxon>
        <taxon>Methanobacteriati</taxon>
        <taxon>Methanobacteriota</taxon>
        <taxon>Stenosarchaea group</taxon>
        <taxon>Halobacteria</taxon>
        <taxon>Halobacteriales</taxon>
        <taxon>Haloferacaceae</taxon>
        <taxon>Haloferax</taxon>
    </lineage>
</organism>
<comment type="function">
    <text evidence="2 4 5">Involved in the assembly of a N-linked pentasaccharide that decorates the S-layer glycoprotein and flagellins. Catalyzes the addition of the mannose found at position 5 of the pentasaccharide to its own distinct dolichol phosphate carrier.</text>
</comment>
<comment type="pathway">
    <text evidence="2">Cell surface structure biogenesis; S-layer biogenesis.</text>
</comment>
<comment type="subcellular location">
    <subcellularLocation>
        <location evidence="6">Cell membrane</location>
        <topology evidence="6">Multi-pass membrane protein</topology>
    </subcellularLocation>
</comment>
<comment type="disruption phenotype">
    <text evidence="5">Mutants exhibit defective or limited motility.</text>
</comment>
<comment type="similarity">
    <text evidence="6">Belongs to the glycosyltransferase 2 family.</text>
</comment>
<dbReference type="EC" id="2.4.1.-"/>
<dbReference type="EMBL" id="AM698042">
    <property type="protein sequence ID" value="CAM91696.1"/>
    <property type="molecule type" value="Genomic_DNA"/>
</dbReference>
<dbReference type="EMBL" id="CP001956">
    <property type="protein sequence ID" value="ADE04998.1"/>
    <property type="molecule type" value="Genomic_DNA"/>
</dbReference>
<dbReference type="RefSeq" id="WP_004044138.1">
    <property type="nucleotide sequence ID" value="NC_013967.1"/>
</dbReference>
<dbReference type="SMR" id="D4GUA0"/>
<dbReference type="STRING" id="309800.HVO_0798"/>
<dbReference type="CAZy" id="GT2">
    <property type="family name" value="Glycosyltransferase Family 2"/>
</dbReference>
<dbReference type="PaxDb" id="309800-C498_14743"/>
<dbReference type="EnsemblBacteria" id="ADE04998">
    <property type="protein sequence ID" value="ADE04998"/>
    <property type="gene ID" value="HVO_0798"/>
</dbReference>
<dbReference type="GeneID" id="8924085"/>
<dbReference type="KEGG" id="hvo:HVO_0798"/>
<dbReference type="eggNOG" id="arCOG00897">
    <property type="taxonomic scope" value="Archaea"/>
</dbReference>
<dbReference type="HOGENOM" id="CLU_474611_0_0_2"/>
<dbReference type="OrthoDB" id="351177at2157"/>
<dbReference type="BioCyc" id="MetaCyc:MONOMER-19290"/>
<dbReference type="UniPathway" id="UPA00977"/>
<dbReference type="Proteomes" id="UP000008243">
    <property type="component" value="Chromosome"/>
</dbReference>
<dbReference type="GO" id="GO:0005886">
    <property type="term" value="C:plasma membrane"/>
    <property type="evidence" value="ECO:0007669"/>
    <property type="project" value="UniProtKB-SubCell"/>
</dbReference>
<dbReference type="GO" id="GO:0016757">
    <property type="term" value="F:glycosyltransferase activity"/>
    <property type="evidence" value="ECO:0007669"/>
    <property type="project" value="UniProtKB-KW"/>
</dbReference>
<dbReference type="GO" id="GO:0006487">
    <property type="term" value="P:protein N-linked glycosylation"/>
    <property type="evidence" value="ECO:0007669"/>
    <property type="project" value="TreeGrafter"/>
</dbReference>
<dbReference type="GO" id="GO:0045232">
    <property type="term" value="P:S-layer organization"/>
    <property type="evidence" value="ECO:0007669"/>
    <property type="project" value="UniProtKB-UniPathway"/>
</dbReference>
<dbReference type="CDD" id="cd04188">
    <property type="entry name" value="DPG_synthase"/>
    <property type="match status" value="1"/>
</dbReference>
<dbReference type="Gene3D" id="3.90.550.10">
    <property type="entry name" value="Spore Coat Polysaccharide Biosynthesis Protein SpsA, Chain A"/>
    <property type="match status" value="1"/>
</dbReference>
<dbReference type="InterPro" id="IPR035518">
    <property type="entry name" value="DPG_synthase"/>
</dbReference>
<dbReference type="InterPro" id="IPR001173">
    <property type="entry name" value="Glyco_trans_2-like"/>
</dbReference>
<dbReference type="InterPro" id="IPR022791">
    <property type="entry name" value="L-PG_synthase/AglD"/>
</dbReference>
<dbReference type="InterPro" id="IPR029044">
    <property type="entry name" value="Nucleotide-diphossugar_trans"/>
</dbReference>
<dbReference type="NCBIfam" id="TIGR00374">
    <property type="entry name" value="flippase-like domain"/>
    <property type="match status" value="2"/>
</dbReference>
<dbReference type="PANTHER" id="PTHR10859:SF105">
    <property type="entry name" value="DOLICHYL-PHOSPHATE BETA-D-MANNOSYLTRANSFERASE"/>
    <property type="match status" value="1"/>
</dbReference>
<dbReference type="PANTHER" id="PTHR10859">
    <property type="entry name" value="GLYCOSYL TRANSFERASE"/>
    <property type="match status" value="1"/>
</dbReference>
<dbReference type="Pfam" id="PF00535">
    <property type="entry name" value="Glycos_transf_2"/>
    <property type="match status" value="1"/>
</dbReference>
<dbReference type="Pfam" id="PF03706">
    <property type="entry name" value="LPG_synthase_TM"/>
    <property type="match status" value="1"/>
</dbReference>
<dbReference type="SUPFAM" id="SSF53448">
    <property type="entry name" value="Nucleotide-diphospho-sugar transferases"/>
    <property type="match status" value="1"/>
</dbReference>
<name>AGLD_HALVD</name>
<gene>
    <name type="primary">aglD</name>
    <name type="ordered locus">HVO_0798</name>
</gene>
<reference key="1">
    <citation type="journal article" date="2007" name="J. Mol. Biol.">
        <title>Haloferax volcanii AglB and AglD are involved in N-glycosylation of the S-layer glycoprotein and proper assembly of the surface layer.</title>
        <authorList>
            <person name="Abu-Qarn M."/>
            <person name="Yurist-Doutsch S."/>
            <person name="Giordana A."/>
            <person name="Trauner A."/>
            <person name="Morris H.R."/>
            <person name="Hitchen P."/>
            <person name="Medalia O."/>
            <person name="Dell A."/>
            <person name="Eichler J."/>
        </authorList>
    </citation>
    <scope>NUCLEOTIDE SEQUENCE [GENOMIC DNA]</scope>
    <scope>FUNCTION</scope>
    <scope>PATHWAY</scope>
    <scope>GENE NAME</scope>
    <source>
        <strain>DS2 / DS70</strain>
    </source>
</reference>
<reference key="2">
    <citation type="journal article" date="2010" name="PLoS ONE">
        <title>The complete genome sequence of Haloferax volcanii DS2, a model archaeon.</title>
        <authorList>
            <person name="Hartman A.L."/>
            <person name="Norais C."/>
            <person name="Badger J.H."/>
            <person name="Delmas S."/>
            <person name="Haldenby S."/>
            <person name="Madupu R."/>
            <person name="Robinson J."/>
            <person name="Khouri H."/>
            <person name="Ren Q."/>
            <person name="Lowe T.M."/>
            <person name="Maupin-Furlow J."/>
            <person name="Pohlschroder M."/>
            <person name="Daniels C."/>
            <person name="Pfeiffer F."/>
            <person name="Allers T."/>
            <person name="Eisen J.A."/>
        </authorList>
    </citation>
    <scope>NUCLEOTIDE SEQUENCE [LARGE SCALE GENOMIC DNA]</scope>
    <source>
        <strain>ATCC 29605 / DSM 3757 / JCM 8879 / NBRC 14742 / NCIMB 2012 / VKM B-1768 / DS2</strain>
    </source>
</reference>
<reference key="3">
    <citation type="journal article" date="2010" name="Archaea">
        <title>Identification of residues important for the activity of Haloferax volcanii AglD, a component of the archaeal N-glycosylation pathway.</title>
        <authorList>
            <person name="Kaminski L."/>
            <person name="Eichler J."/>
        </authorList>
    </citation>
    <scope>MUTAGENESIS OF ASP-110; ASP-112; ASP-133; GLY-137; SER-138; ARG-139; ASP-173; GLN-175; CYS-176; GLY-177; PHE-178; LYS-179; ASP-195 AND ASP-201</scope>
    <source>
        <strain>DS2 / DS70</strain>
    </source>
</reference>
<reference key="4">
    <citation type="journal article" date="2010" name="Mol. Microbiol.">
        <title>Distinct glycan-charged phosphodolichol carriers are required for the assembly of the pentasaccharide N-linked to the Haloferax volcanii S-layer glycoprotein.</title>
        <authorList>
            <person name="Guan Z."/>
            <person name="Naparstek S."/>
            <person name="Kaminski L."/>
            <person name="Konrad Z."/>
            <person name="Eichler J."/>
        </authorList>
    </citation>
    <scope>FUNCTION</scope>
    <source>
        <strain>H53</strain>
    </source>
</reference>
<reference key="5">
    <citation type="journal article" date="2012" name="J. Bacteriol.">
        <title>N-glycosylation of Haloferax volcanii flagellins requires known Agl proteins and is essential for biosynthesis of stable flagella.</title>
        <authorList>
            <person name="Tripepi M."/>
            <person name="You J."/>
            <person name="Temel S."/>
            <person name="Onder O."/>
            <person name="Brisson D."/>
            <person name="Pohlschroder M."/>
        </authorList>
    </citation>
    <scope>FUNCTION IN GLYCOSYLATION OF FLAGELLINS</scope>
    <scope>DISRUPTION PHENOTYPE</scope>
    <source>
        <strain>H53</strain>
    </source>
</reference>
<feature type="chain" id="PRO_0000415388" description="Glycosyltransferase AglD">
    <location>
        <begin position="1"/>
        <end position="624"/>
    </location>
</feature>
<feature type="transmembrane region" description="Helical" evidence="1">
    <location>
        <begin position="260"/>
        <end position="280"/>
    </location>
</feature>
<feature type="transmembrane region" description="Helical" evidence="1">
    <location>
        <begin position="285"/>
        <end position="305"/>
    </location>
</feature>
<feature type="transmembrane region" description="Helical" evidence="1">
    <location>
        <begin position="381"/>
        <end position="401"/>
    </location>
</feature>
<feature type="transmembrane region" description="Helical" evidence="1">
    <location>
        <begin position="427"/>
        <end position="447"/>
    </location>
</feature>
<feature type="transmembrane region" description="Helical" evidence="1">
    <location>
        <begin position="496"/>
        <end position="518"/>
    </location>
</feature>
<feature type="transmembrane region" description="Helical" evidence="1">
    <location>
        <begin position="532"/>
        <end position="552"/>
    </location>
</feature>
<feature type="transmembrane region" description="Helical" evidence="1">
    <location>
        <begin position="556"/>
        <end position="576"/>
    </location>
</feature>
<feature type="transmembrane region" description="Helical" evidence="1">
    <location>
        <begin position="587"/>
        <end position="607"/>
    </location>
</feature>
<feature type="active site" evidence="6">
    <location>
        <position position="201"/>
    </location>
</feature>
<feature type="mutagenesis site" description="Loss of activity." evidence="3">
    <original>D</original>
    <variation>A</variation>
    <variation>E</variation>
    <location>
        <position position="110"/>
    </location>
</feature>
<feature type="mutagenesis site" description="Change in activity." evidence="3">
    <original>D</original>
    <variation>E</variation>
    <location>
        <position position="112"/>
    </location>
</feature>
<feature type="mutagenesis site" description="Loss of activity." evidence="3">
    <original>D</original>
    <variation>N</variation>
    <location>
        <position position="112"/>
    </location>
</feature>
<feature type="mutagenesis site" description="No change in activity." evidence="3">
    <original>D</original>
    <variation>A</variation>
    <location>
        <position position="133"/>
    </location>
</feature>
<feature type="mutagenesis site" description="No change in activity." evidence="3">
    <original>G</original>
    <variation>A</variation>
    <location>
        <position position="137"/>
    </location>
</feature>
<feature type="mutagenesis site" description="No change in activity." evidence="3">
    <original>S</original>
    <variation>A</variation>
    <location>
        <position position="138"/>
    </location>
</feature>
<feature type="mutagenesis site" description="Loss of activity." evidence="3">
    <original>R</original>
    <variation>A</variation>
    <variation>E</variation>
    <variation>K</variation>
    <variation>M</variation>
    <location>
        <position position="139"/>
    </location>
</feature>
<feature type="mutagenesis site" description="Loss of activity." evidence="3">
    <original>D</original>
    <variation>E</variation>
    <location>
        <position position="173"/>
    </location>
</feature>
<feature type="mutagenesis site" description="No change in activity." evidence="3">
    <original>D</original>
    <variation>N</variation>
    <location>
        <position position="173"/>
    </location>
</feature>
<feature type="mutagenesis site" description="No change in activity." evidence="3">
    <original>Q</original>
    <variation>A</variation>
    <location>
        <position position="175"/>
    </location>
</feature>
<feature type="mutagenesis site" description="No change in activity." evidence="3">
    <original>C</original>
    <variation>A</variation>
    <location>
        <position position="176"/>
    </location>
</feature>
<feature type="mutagenesis site" description="No change in activity." evidence="3">
    <original>G</original>
    <variation>A</variation>
    <location>
        <position position="177"/>
    </location>
</feature>
<feature type="mutagenesis site" description="No change in activity." evidence="3">
    <original>F</original>
    <variation>A</variation>
    <location>
        <position position="178"/>
    </location>
</feature>
<feature type="mutagenesis site" description="No change in activity." evidence="3">
    <original>K</original>
    <variation>A</variation>
    <location>
        <position position="179"/>
    </location>
</feature>
<feature type="mutagenesis site" description="No change in activity." evidence="3">
    <original>D</original>
    <variation>A</variation>
    <location>
        <position position="195"/>
    </location>
</feature>
<feature type="mutagenesis site" description="Loss of activity." evidence="3">
    <original>D</original>
    <variation>A</variation>
    <variation>N</variation>
    <location>
        <position position="201"/>
    </location>
</feature>
<feature type="mutagenesis site" description="No change in activity." evidence="3">
    <original>D</original>
    <variation>E</variation>
    <location>
        <position position="201"/>
    </location>
</feature>
<evidence type="ECO:0000255" key="1"/>
<evidence type="ECO:0000269" key="2">
    <source>
    </source>
</evidence>
<evidence type="ECO:0000269" key="3">
    <source>
    </source>
</evidence>
<evidence type="ECO:0000269" key="4">
    <source>
    </source>
</evidence>
<evidence type="ECO:0000269" key="5">
    <source>
    </source>
</evidence>
<evidence type="ECO:0000305" key="6"/>
<protein>
    <recommendedName>
        <fullName>Glycosyltransferase AglD</fullName>
        <ecNumber>2.4.1.-</ecNumber>
    </recommendedName>
    <alternativeName>
        <fullName>Archaeal glycosylation protein D</fullName>
    </alternativeName>
</protein>
<sequence length="624" mass="66990">MGRPTERRPAAATAAGVEVSVVLPAYNEARTIENTVRVTVETLESFLPADAFEVIVAEDGCDDETPEIADRLAAEDDRIRHYHSDDRLGRGGALERAFEAARGDTLVYFDTDLATDMRHLEELVERVRSGEYDAATGSRWMPDRVADRPRKRGVPSRAYNGLVRLFLRSDLRDHQCGFKAFSREAFEALRDDVEDNHWFWDTEMLVRAQRAGFRVAEFPVDWEPKGDTKVDLVRDILGMGSQILRTWWQLTVRPRITRRVTIVAGLLLTVLALALMTLYIDPSEVISVLGDADPALVAAAAVIYVVSWPLRGIRYREILRELGYREKAGFLTGAIFISQTGNLVFPARAGDAVRAYVVKARRNIPYPSGFASLAVERVFDLLTIAGLAGVVLVGLAATGGLDDIATVLATGVSGGSVDVSADDVRTAAYVATGVGVVAILGVLGIALSARADRNVVRAFVGRFSSDSYVELVAGVIEQFVSDLQAVAGNRAAFGRVGLTSLAIWTVDVVTAVVVLLALGVDIDPVVLVGVSFFAVSVGNLAKVLPLSPGGVGLYEIAFTVFMAALAPVTPAAALAAAVLDHAVKNAVTIVGGVGSMLSLNVSLTTAVEESAEVRDREHELADSK</sequence>
<proteinExistence type="evidence at protein level"/>
<accession>D4GUA0</accession>
<accession>A4VB68</accession>